<proteinExistence type="evidence at transcript level"/>
<organism>
    <name type="scientific">Bos taurus</name>
    <name type="common">Bovine</name>
    <dbReference type="NCBI Taxonomy" id="9913"/>
    <lineage>
        <taxon>Eukaryota</taxon>
        <taxon>Metazoa</taxon>
        <taxon>Chordata</taxon>
        <taxon>Craniata</taxon>
        <taxon>Vertebrata</taxon>
        <taxon>Euteleostomi</taxon>
        <taxon>Mammalia</taxon>
        <taxon>Eutheria</taxon>
        <taxon>Laurasiatheria</taxon>
        <taxon>Artiodactyla</taxon>
        <taxon>Ruminantia</taxon>
        <taxon>Pecora</taxon>
        <taxon>Bovidae</taxon>
        <taxon>Bovinae</taxon>
        <taxon>Bos</taxon>
    </lineage>
</organism>
<feature type="initiator methionine" description="Removed" evidence="2">
    <location>
        <position position="1"/>
    </location>
</feature>
<feature type="chain" id="PRO_0000358924" description="Damage-control phosphatase ARMT1">
    <location>
        <begin position="2"/>
        <end position="441"/>
    </location>
</feature>
<feature type="short sequence motif" description="Subfamily III RTxK motif" evidence="1">
    <location>
        <begin position="401"/>
        <end position="404"/>
    </location>
</feature>
<feature type="binding site" evidence="1">
    <location>
        <begin position="253"/>
        <end position="254"/>
    </location>
    <ligand>
        <name>substrate</name>
    </ligand>
</feature>
<feature type="binding site" evidence="1">
    <location>
        <position position="253"/>
    </location>
    <ligand>
        <name>Mn(2+)</name>
        <dbReference type="ChEBI" id="CHEBI:29035"/>
        <note>catalytic</note>
    </ligand>
</feature>
<feature type="binding site" evidence="1">
    <location>
        <position position="254"/>
    </location>
    <ligand>
        <name>Mn(2+)</name>
        <dbReference type="ChEBI" id="CHEBI:29035"/>
        <note>catalytic</note>
    </ligand>
</feature>
<feature type="binding site" evidence="2">
    <location>
        <position position="258"/>
    </location>
    <ligand>
        <name>S-adenosyl-L-methionine</name>
        <dbReference type="ChEBI" id="CHEBI:59789"/>
    </ligand>
</feature>
<feature type="binding site" evidence="1">
    <location>
        <position position="291"/>
    </location>
    <ligand>
        <name>Mn(2+)</name>
        <dbReference type="ChEBI" id="CHEBI:29035"/>
        <note>catalytic</note>
    </ligand>
</feature>
<feature type="binding site" evidence="2">
    <location>
        <position position="291"/>
    </location>
    <ligand>
        <name>S-adenosyl-L-methionine</name>
        <dbReference type="ChEBI" id="CHEBI:59789"/>
    </ligand>
</feature>
<feature type="binding site" evidence="1">
    <location>
        <begin position="367"/>
        <end position="371"/>
    </location>
    <ligand>
        <name>substrate</name>
    </ligand>
</feature>
<feature type="binding site" evidence="1">
    <location>
        <position position="404"/>
    </location>
    <ligand>
        <name>substrate</name>
    </ligand>
</feature>
<feature type="modified residue" description="N-acetylalanine" evidence="2">
    <location>
        <position position="2"/>
    </location>
</feature>
<feature type="modified residue" description="N6-acetyllysine" evidence="2">
    <location>
        <position position="40"/>
    </location>
</feature>
<feature type="modified residue" description="Phosphoserine" evidence="2">
    <location>
        <position position="102"/>
    </location>
</feature>
<name>ARMT1_BOVIN</name>
<evidence type="ECO:0000250" key="1">
    <source>
        <dbReference type="UniProtKB" id="Q04371"/>
    </source>
</evidence>
<evidence type="ECO:0000250" key="2">
    <source>
        <dbReference type="UniProtKB" id="Q9H993"/>
    </source>
</evidence>
<evidence type="ECO:0000305" key="3"/>
<sequence length="441" mass="50964">MAGPPASLSARDVGSFAYLSVKDRSPQILTKAIDTLHRHKSEFFEKHGEKGLEAEKKAISLLSKLRNELQTDKPIVPLVEKFVDTDIWNQYLEYQQSLLNESDGKPRWFLSPWLFVECYMYRRIHEAIIQSPPIDDFDIFKEFKDQNFFESQESIIALCTHLQELRKTIEDLDENQLKNEFFKVLQISLWGNKCDLSLSGGEHISQKTNIMNSLEDLKPFILVNDMDRLWSLLSNCKKTREKESVTRVDIVLDNSGFELITDLVLADFLLSSKLATKIHFYGKTIPWFVSDTTLHDFNWIIKQLKHSNNKWVSQCGVDWEDHVKTGRWVYLDHIFWTLPHEFSAMSQVAPDLHAALQKAHLIFFKGDLNYRKLTGDRRWEFTVPFHEALSGFHPAPLCSIRTLKAEVQVGLQPGQGEQLTASEPNWLTAGKYGVFQFDGPL</sequence>
<comment type="function">
    <text evidence="1 2">Metal-dependent phosphatase that shows phosphatase activity against several substrates, including fructose-1-phosphate and fructose-6-phosphate (By similarity). Its preference for fructose-1-phosphate, a strong glycating agent that causes DNA damage rather than a canonical yeast metabolite, suggests a damage-control function in hexose phosphate metabolism (By similarity). Has also been shown to have O-methyltransferase activity that methylates glutamate residues of target proteins to form gamma-glutamyl methyl ester residues (By similarity). Possibly methylates PCNA, suggesting it is involved in the DNA damage response (By similarity).</text>
</comment>
<comment type="catalytic activity">
    <reaction evidence="1">
        <text>beta-D-fructose 1-phosphate + H2O = D-fructose + phosphate</text>
        <dbReference type="Rhea" id="RHEA:35603"/>
        <dbReference type="ChEBI" id="CHEBI:15377"/>
        <dbReference type="ChEBI" id="CHEBI:37721"/>
        <dbReference type="ChEBI" id="CHEBI:43474"/>
        <dbReference type="ChEBI" id="CHEBI:138881"/>
    </reaction>
</comment>
<comment type="catalytic activity">
    <reaction evidence="1">
        <text>beta-D-fructose 6-phosphate = dihydroxyacetone + D-glyceraldehyde 3-phosphate</text>
        <dbReference type="Rhea" id="RHEA:28002"/>
        <dbReference type="ChEBI" id="CHEBI:16016"/>
        <dbReference type="ChEBI" id="CHEBI:57634"/>
        <dbReference type="ChEBI" id="CHEBI:59776"/>
    </reaction>
</comment>
<comment type="catalytic activity">
    <reaction evidence="2">
        <text>L-glutamyl-[protein] + S-adenosyl-L-methionine = [protein]-L-glutamate 5-O-methyl ester + S-adenosyl-L-homocysteine</text>
        <dbReference type="Rhea" id="RHEA:24452"/>
        <dbReference type="Rhea" id="RHEA-COMP:10208"/>
        <dbReference type="Rhea" id="RHEA-COMP:10311"/>
        <dbReference type="ChEBI" id="CHEBI:29973"/>
        <dbReference type="ChEBI" id="CHEBI:57856"/>
        <dbReference type="ChEBI" id="CHEBI:59789"/>
        <dbReference type="ChEBI" id="CHEBI:82795"/>
    </reaction>
</comment>
<comment type="cofactor">
    <cofactor evidence="1">
        <name>Mn(2+)</name>
        <dbReference type="ChEBI" id="CHEBI:29035"/>
    </cofactor>
    <cofactor evidence="1">
        <name>Ni(2+)</name>
        <dbReference type="ChEBI" id="CHEBI:49786"/>
    </cofactor>
</comment>
<comment type="domain">
    <text evidence="1">Subfamily III proteins have a conserved RTxK motif about 40-50 residues from the C-terminus; the threonine may be replaced by serine or cysteine.</text>
</comment>
<comment type="PTM">
    <text evidence="2">Automethylated.</text>
</comment>
<comment type="similarity">
    <text evidence="3">Belongs to the damage-control phosphatase family. Sugar phosphate phosphatase III subfamily.</text>
</comment>
<comment type="caution">
    <text evidence="2">Human C6orf211 has been reportedly associated with a protein carboxyl methyltransferase activity, but whether this protein indeed has such an activity remains to be determined (By similarity). It has been later shown to belong to a family of metal-dependent phosphatases implicated in metabolite damage-control (By similarity).</text>
</comment>
<reference key="1">
    <citation type="submission" date="2007-02" db="EMBL/GenBank/DDBJ databases">
        <authorList>
            <consortium name="NIH - Mammalian Gene Collection (MGC) project"/>
        </authorList>
    </citation>
    <scope>NUCLEOTIDE SEQUENCE [LARGE SCALE MRNA]</scope>
    <source>
        <strain>Hereford</strain>
        <tissue>Fetal muscle</tissue>
    </source>
</reference>
<dbReference type="EC" id="3.1.3.-" evidence="1"/>
<dbReference type="EC" id="2.1.1.-" evidence="2"/>
<dbReference type="EMBL" id="BC133378">
    <property type="protein sequence ID" value="AAI33379.1"/>
    <property type="molecule type" value="mRNA"/>
</dbReference>
<dbReference type="RefSeq" id="NP_001076968.1">
    <property type="nucleotide sequence ID" value="NM_001083499.1"/>
</dbReference>
<dbReference type="SMR" id="A3KMX8"/>
<dbReference type="FunCoup" id="A3KMX8">
    <property type="interactions" value="2253"/>
</dbReference>
<dbReference type="STRING" id="9913.ENSBTAP00000005354"/>
<dbReference type="PaxDb" id="9913-ENSBTAP00000005354"/>
<dbReference type="GeneID" id="540698"/>
<dbReference type="KEGG" id="bta:540698"/>
<dbReference type="CTD" id="79624"/>
<dbReference type="eggNOG" id="KOG3870">
    <property type="taxonomic scope" value="Eukaryota"/>
</dbReference>
<dbReference type="InParanoid" id="A3KMX8"/>
<dbReference type="OrthoDB" id="541375at2759"/>
<dbReference type="Proteomes" id="UP000009136">
    <property type="component" value="Unplaced"/>
</dbReference>
<dbReference type="GO" id="GO:0097023">
    <property type="term" value="F:fructose 6-phosphate aldolase activity"/>
    <property type="evidence" value="ECO:0007669"/>
    <property type="project" value="RHEA"/>
</dbReference>
<dbReference type="GO" id="GO:0103026">
    <property type="term" value="F:fructose-1-phosphatase activity"/>
    <property type="evidence" value="ECO:0007669"/>
    <property type="project" value="RHEA"/>
</dbReference>
<dbReference type="GO" id="GO:0046872">
    <property type="term" value="F:metal ion binding"/>
    <property type="evidence" value="ECO:0007669"/>
    <property type="project" value="UniProtKB-KW"/>
</dbReference>
<dbReference type="GO" id="GO:0016791">
    <property type="term" value="F:phosphatase activity"/>
    <property type="evidence" value="ECO:0000318"/>
    <property type="project" value="GO_Central"/>
</dbReference>
<dbReference type="GO" id="GO:0051998">
    <property type="term" value="F:protein carboxyl O-methyltransferase activity"/>
    <property type="evidence" value="ECO:0000250"/>
    <property type="project" value="UniProtKB"/>
</dbReference>
<dbReference type="GO" id="GO:0008983">
    <property type="term" value="F:protein-glutamate O-methyltransferase activity"/>
    <property type="evidence" value="ECO:0007669"/>
    <property type="project" value="RHEA"/>
</dbReference>
<dbReference type="GO" id="GO:0008757">
    <property type="term" value="F:S-adenosylmethionine-dependent methyltransferase activity"/>
    <property type="evidence" value="ECO:0000250"/>
    <property type="project" value="UniProtKB"/>
</dbReference>
<dbReference type="GO" id="GO:0006974">
    <property type="term" value="P:DNA damage response"/>
    <property type="evidence" value="ECO:0000250"/>
    <property type="project" value="UniProtKB"/>
</dbReference>
<dbReference type="GO" id="GO:0032259">
    <property type="term" value="P:methylation"/>
    <property type="evidence" value="ECO:0007669"/>
    <property type="project" value="UniProtKB-KW"/>
</dbReference>
<dbReference type="FunFam" id="3.40.50.10880:FF:000002">
    <property type="entry name" value="Acidic residue methyltransferase 1"/>
    <property type="match status" value="1"/>
</dbReference>
<dbReference type="FunFam" id="1.20.930.60:FF:000001">
    <property type="entry name" value="protein-glutamate O-methyltransferase isoform X1"/>
    <property type="match status" value="1"/>
</dbReference>
<dbReference type="Gene3D" id="1.20.930.60">
    <property type="match status" value="1"/>
</dbReference>
<dbReference type="Gene3D" id="3.40.50.10880">
    <property type="entry name" value="Uncharacterised protein PF01937, DUF89, domain 3"/>
    <property type="match status" value="1"/>
</dbReference>
<dbReference type="InterPro" id="IPR036075">
    <property type="entry name" value="ARMT-1-like_metal-bd_sf"/>
</dbReference>
<dbReference type="InterPro" id="IPR039763">
    <property type="entry name" value="ARMT1"/>
</dbReference>
<dbReference type="InterPro" id="IPR002791">
    <property type="entry name" value="ARMT1-like_metal-bd"/>
</dbReference>
<dbReference type="PANTHER" id="PTHR12260">
    <property type="entry name" value="DAMAGE-CONTROL PHOSPHATASE ARMT1"/>
    <property type="match status" value="1"/>
</dbReference>
<dbReference type="PANTHER" id="PTHR12260:SF6">
    <property type="entry name" value="DAMAGE-CONTROL PHOSPHATASE ARMT1"/>
    <property type="match status" value="1"/>
</dbReference>
<dbReference type="Pfam" id="PF01937">
    <property type="entry name" value="ARMT1-like_dom"/>
    <property type="match status" value="1"/>
</dbReference>
<dbReference type="SUPFAM" id="SSF111321">
    <property type="entry name" value="AF1104-like"/>
    <property type="match status" value="1"/>
</dbReference>
<protein>
    <recommendedName>
        <fullName evidence="1">Damage-control phosphatase ARMT1</fullName>
        <ecNumber evidence="1">3.1.3.-</ecNumber>
    </recommendedName>
    <alternativeName>
        <fullName evidence="2">Acidic residue methyltransferase 1</fullName>
    </alternativeName>
    <alternativeName>
        <fullName evidence="2">Protein-glutamate O-methyltransferase</fullName>
        <ecNumber evidence="2">2.1.1.-</ecNumber>
    </alternativeName>
    <alternativeName>
        <fullName evidence="1">Sugar phosphate phosphatase ARMT1</fullName>
    </alternativeName>
</protein>
<keyword id="KW-0007">Acetylation</keyword>
<keyword id="KW-0227">DNA damage</keyword>
<keyword id="KW-0378">Hydrolase</keyword>
<keyword id="KW-0464">Manganese</keyword>
<keyword id="KW-0479">Metal-binding</keyword>
<keyword id="KW-0489">Methyltransferase</keyword>
<keyword id="KW-0533">Nickel</keyword>
<keyword id="KW-0597">Phosphoprotein</keyword>
<keyword id="KW-1185">Reference proteome</keyword>
<keyword id="KW-0949">S-adenosyl-L-methionine</keyword>
<keyword id="KW-0808">Transferase</keyword>
<gene>
    <name evidence="2" type="primary">ARMT1</name>
</gene>
<accession>A3KMX8</accession>